<proteinExistence type="inferred from homology"/>
<feature type="chain" id="PRO_1000091751" description="Elongation factor G">
    <location>
        <begin position="1"/>
        <end position="699"/>
    </location>
</feature>
<feature type="domain" description="tr-type G">
    <location>
        <begin position="8"/>
        <end position="288"/>
    </location>
</feature>
<feature type="binding site" evidence="1">
    <location>
        <begin position="17"/>
        <end position="24"/>
    </location>
    <ligand>
        <name>GTP</name>
        <dbReference type="ChEBI" id="CHEBI:37565"/>
    </ligand>
</feature>
<feature type="binding site" evidence="1">
    <location>
        <begin position="86"/>
        <end position="90"/>
    </location>
    <ligand>
        <name>GTP</name>
        <dbReference type="ChEBI" id="CHEBI:37565"/>
    </ligand>
</feature>
<feature type="binding site" evidence="1">
    <location>
        <begin position="140"/>
        <end position="143"/>
    </location>
    <ligand>
        <name>GTP</name>
        <dbReference type="ChEBI" id="CHEBI:37565"/>
    </ligand>
</feature>
<evidence type="ECO:0000255" key="1">
    <source>
        <dbReference type="HAMAP-Rule" id="MF_00054"/>
    </source>
</evidence>
<accession>B3PWR8</accession>
<reference key="1">
    <citation type="journal article" date="2010" name="Appl. Environ. Microbiol.">
        <title>Conserved symbiotic plasmid DNA sequences in the multireplicon pangenomic structure of Rhizobium etli.</title>
        <authorList>
            <person name="Gonzalez V."/>
            <person name="Acosta J.L."/>
            <person name="Santamaria R.I."/>
            <person name="Bustos P."/>
            <person name="Fernandez J.L."/>
            <person name="Hernandez Gonzalez I.L."/>
            <person name="Diaz R."/>
            <person name="Flores M."/>
            <person name="Palacios R."/>
            <person name="Mora J."/>
            <person name="Davila G."/>
        </authorList>
    </citation>
    <scope>NUCLEOTIDE SEQUENCE [LARGE SCALE GENOMIC DNA]</scope>
    <source>
        <strain>CIAT 652</strain>
    </source>
</reference>
<gene>
    <name evidence="1" type="primary">fusA</name>
    <name type="ordered locus">RHECIAT_CH0001746</name>
</gene>
<protein>
    <recommendedName>
        <fullName evidence="1">Elongation factor G</fullName>
        <shortName evidence="1">EF-G</shortName>
    </recommendedName>
</protein>
<dbReference type="EMBL" id="CP001074">
    <property type="protein sequence ID" value="ACE90716.1"/>
    <property type="molecule type" value="Genomic_DNA"/>
</dbReference>
<dbReference type="SMR" id="B3PWR8"/>
<dbReference type="KEGG" id="rec:RHECIAT_CH0001746"/>
<dbReference type="eggNOG" id="COG0480">
    <property type="taxonomic scope" value="Bacteria"/>
</dbReference>
<dbReference type="HOGENOM" id="CLU_002794_4_1_5"/>
<dbReference type="Proteomes" id="UP000008817">
    <property type="component" value="Chromosome"/>
</dbReference>
<dbReference type="GO" id="GO:0005737">
    <property type="term" value="C:cytoplasm"/>
    <property type="evidence" value="ECO:0007669"/>
    <property type="project" value="UniProtKB-SubCell"/>
</dbReference>
<dbReference type="GO" id="GO:0005525">
    <property type="term" value="F:GTP binding"/>
    <property type="evidence" value="ECO:0007669"/>
    <property type="project" value="UniProtKB-UniRule"/>
</dbReference>
<dbReference type="GO" id="GO:0003924">
    <property type="term" value="F:GTPase activity"/>
    <property type="evidence" value="ECO:0007669"/>
    <property type="project" value="InterPro"/>
</dbReference>
<dbReference type="GO" id="GO:0003746">
    <property type="term" value="F:translation elongation factor activity"/>
    <property type="evidence" value="ECO:0007669"/>
    <property type="project" value="UniProtKB-UniRule"/>
</dbReference>
<dbReference type="GO" id="GO:0032790">
    <property type="term" value="P:ribosome disassembly"/>
    <property type="evidence" value="ECO:0007669"/>
    <property type="project" value="TreeGrafter"/>
</dbReference>
<dbReference type="CDD" id="cd01886">
    <property type="entry name" value="EF-G"/>
    <property type="match status" value="1"/>
</dbReference>
<dbReference type="CDD" id="cd16262">
    <property type="entry name" value="EFG_III"/>
    <property type="match status" value="1"/>
</dbReference>
<dbReference type="CDD" id="cd01434">
    <property type="entry name" value="EFG_mtEFG1_IV"/>
    <property type="match status" value="1"/>
</dbReference>
<dbReference type="CDD" id="cd03713">
    <property type="entry name" value="EFG_mtEFG_C"/>
    <property type="match status" value="1"/>
</dbReference>
<dbReference type="CDD" id="cd04088">
    <property type="entry name" value="EFG_mtEFG_II"/>
    <property type="match status" value="1"/>
</dbReference>
<dbReference type="FunFam" id="2.40.30.10:FF:000006">
    <property type="entry name" value="Elongation factor G"/>
    <property type="match status" value="1"/>
</dbReference>
<dbReference type="FunFam" id="3.30.230.10:FF:000003">
    <property type="entry name" value="Elongation factor G"/>
    <property type="match status" value="1"/>
</dbReference>
<dbReference type="FunFam" id="3.30.70.240:FF:000001">
    <property type="entry name" value="Elongation factor G"/>
    <property type="match status" value="1"/>
</dbReference>
<dbReference type="FunFam" id="3.30.70.870:FF:000001">
    <property type="entry name" value="Elongation factor G"/>
    <property type="match status" value="1"/>
</dbReference>
<dbReference type="FunFam" id="3.40.50.300:FF:000029">
    <property type="entry name" value="Elongation factor G"/>
    <property type="match status" value="1"/>
</dbReference>
<dbReference type="Gene3D" id="3.30.230.10">
    <property type="match status" value="1"/>
</dbReference>
<dbReference type="Gene3D" id="3.30.70.240">
    <property type="match status" value="1"/>
</dbReference>
<dbReference type="Gene3D" id="3.30.70.870">
    <property type="entry name" value="Elongation Factor G (Translational Gtpase), domain 3"/>
    <property type="match status" value="1"/>
</dbReference>
<dbReference type="Gene3D" id="3.40.50.300">
    <property type="entry name" value="P-loop containing nucleotide triphosphate hydrolases"/>
    <property type="match status" value="1"/>
</dbReference>
<dbReference type="Gene3D" id="2.40.30.10">
    <property type="entry name" value="Translation factors"/>
    <property type="match status" value="1"/>
</dbReference>
<dbReference type="HAMAP" id="MF_00054_B">
    <property type="entry name" value="EF_G_EF_2_B"/>
    <property type="match status" value="1"/>
</dbReference>
<dbReference type="InterPro" id="IPR053905">
    <property type="entry name" value="EF-G-like_DII"/>
</dbReference>
<dbReference type="InterPro" id="IPR041095">
    <property type="entry name" value="EFG_II"/>
</dbReference>
<dbReference type="InterPro" id="IPR009022">
    <property type="entry name" value="EFG_III"/>
</dbReference>
<dbReference type="InterPro" id="IPR035647">
    <property type="entry name" value="EFG_III/V"/>
</dbReference>
<dbReference type="InterPro" id="IPR047872">
    <property type="entry name" value="EFG_IV"/>
</dbReference>
<dbReference type="InterPro" id="IPR035649">
    <property type="entry name" value="EFG_V"/>
</dbReference>
<dbReference type="InterPro" id="IPR000640">
    <property type="entry name" value="EFG_V-like"/>
</dbReference>
<dbReference type="InterPro" id="IPR031157">
    <property type="entry name" value="G_TR_CS"/>
</dbReference>
<dbReference type="InterPro" id="IPR027417">
    <property type="entry name" value="P-loop_NTPase"/>
</dbReference>
<dbReference type="InterPro" id="IPR020568">
    <property type="entry name" value="Ribosomal_Su5_D2-typ_SF"/>
</dbReference>
<dbReference type="InterPro" id="IPR014721">
    <property type="entry name" value="Ribsml_uS5_D2-typ_fold_subgr"/>
</dbReference>
<dbReference type="InterPro" id="IPR005225">
    <property type="entry name" value="Small_GTP-bd"/>
</dbReference>
<dbReference type="InterPro" id="IPR000795">
    <property type="entry name" value="T_Tr_GTP-bd_dom"/>
</dbReference>
<dbReference type="InterPro" id="IPR009000">
    <property type="entry name" value="Transl_B-barrel_sf"/>
</dbReference>
<dbReference type="InterPro" id="IPR004540">
    <property type="entry name" value="Transl_elong_EFG/EF2"/>
</dbReference>
<dbReference type="InterPro" id="IPR005517">
    <property type="entry name" value="Transl_elong_EFG/EF2_IV"/>
</dbReference>
<dbReference type="NCBIfam" id="TIGR00484">
    <property type="entry name" value="EF-G"/>
    <property type="match status" value="1"/>
</dbReference>
<dbReference type="NCBIfam" id="NF009381">
    <property type="entry name" value="PRK12740.1-5"/>
    <property type="match status" value="1"/>
</dbReference>
<dbReference type="NCBIfam" id="TIGR00231">
    <property type="entry name" value="small_GTP"/>
    <property type="match status" value="1"/>
</dbReference>
<dbReference type="PANTHER" id="PTHR43261:SF1">
    <property type="entry name" value="RIBOSOME-RELEASING FACTOR 2, MITOCHONDRIAL"/>
    <property type="match status" value="1"/>
</dbReference>
<dbReference type="PANTHER" id="PTHR43261">
    <property type="entry name" value="TRANSLATION ELONGATION FACTOR G-RELATED"/>
    <property type="match status" value="1"/>
</dbReference>
<dbReference type="Pfam" id="PF22042">
    <property type="entry name" value="EF-G_D2"/>
    <property type="match status" value="1"/>
</dbReference>
<dbReference type="Pfam" id="PF00679">
    <property type="entry name" value="EFG_C"/>
    <property type="match status" value="1"/>
</dbReference>
<dbReference type="Pfam" id="PF14492">
    <property type="entry name" value="EFG_III"/>
    <property type="match status" value="1"/>
</dbReference>
<dbReference type="Pfam" id="PF03764">
    <property type="entry name" value="EFG_IV"/>
    <property type="match status" value="1"/>
</dbReference>
<dbReference type="Pfam" id="PF00009">
    <property type="entry name" value="GTP_EFTU"/>
    <property type="match status" value="1"/>
</dbReference>
<dbReference type="PRINTS" id="PR00315">
    <property type="entry name" value="ELONGATNFCT"/>
</dbReference>
<dbReference type="SMART" id="SM00838">
    <property type="entry name" value="EFG_C"/>
    <property type="match status" value="1"/>
</dbReference>
<dbReference type="SMART" id="SM00889">
    <property type="entry name" value="EFG_IV"/>
    <property type="match status" value="1"/>
</dbReference>
<dbReference type="SUPFAM" id="SSF54980">
    <property type="entry name" value="EF-G C-terminal domain-like"/>
    <property type="match status" value="2"/>
</dbReference>
<dbReference type="SUPFAM" id="SSF52540">
    <property type="entry name" value="P-loop containing nucleoside triphosphate hydrolases"/>
    <property type="match status" value="1"/>
</dbReference>
<dbReference type="SUPFAM" id="SSF54211">
    <property type="entry name" value="Ribosomal protein S5 domain 2-like"/>
    <property type="match status" value="1"/>
</dbReference>
<dbReference type="SUPFAM" id="SSF50447">
    <property type="entry name" value="Translation proteins"/>
    <property type="match status" value="1"/>
</dbReference>
<dbReference type="PROSITE" id="PS00301">
    <property type="entry name" value="G_TR_1"/>
    <property type="match status" value="1"/>
</dbReference>
<dbReference type="PROSITE" id="PS51722">
    <property type="entry name" value="G_TR_2"/>
    <property type="match status" value="1"/>
</dbReference>
<organism>
    <name type="scientific">Rhizobium etli (strain CIAT 652)</name>
    <dbReference type="NCBI Taxonomy" id="491916"/>
    <lineage>
        <taxon>Bacteria</taxon>
        <taxon>Pseudomonadati</taxon>
        <taxon>Pseudomonadota</taxon>
        <taxon>Alphaproteobacteria</taxon>
        <taxon>Hyphomicrobiales</taxon>
        <taxon>Rhizobiaceae</taxon>
        <taxon>Rhizobium/Agrobacterium group</taxon>
        <taxon>Rhizobium</taxon>
    </lineage>
</organism>
<comment type="function">
    <text evidence="1">Catalyzes the GTP-dependent ribosomal translocation step during translation elongation. During this step, the ribosome changes from the pre-translocational (PRE) to the post-translocational (POST) state as the newly formed A-site-bound peptidyl-tRNA and P-site-bound deacylated tRNA move to the P and E sites, respectively. Catalyzes the coordinated movement of the two tRNA molecules, the mRNA and conformational changes in the ribosome.</text>
</comment>
<comment type="subcellular location">
    <subcellularLocation>
        <location evidence="1">Cytoplasm</location>
    </subcellularLocation>
</comment>
<comment type="similarity">
    <text evidence="1">Belongs to the TRAFAC class translation factor GTPase superfamily. Classic translation factor GTPase family. EF-G/EF-2 subfamily.</text>
</comment>
<name>EFG_RHIE6</name>
<sequence length="699" mass="77794">MAREYKIEDYRNFGIMAHIDAGKTTTTERILYYTGKSHKIGEVHDGAATMDWMEQEQERGITITSAATTTFWKGRDGKMRRFNIIDTPGHVDFTIEVERSLRVLDGAIALLDANAGVEPQTETVWRQAEKYNVPRMIFCNKMDKTGADFYRSVEMIKTRLGATAVVMQLPIGAESDFKGVIDLVEMNALIWRDESLGAQWDVVEIPEDLKAKAEEYREKLIETVVEIDEAAMEAYLEGNMPDNDKIRELVRRGTIDVKFHPMFCGTAFKNKGVQPLLDAVVDYLPSPLDIPAIKGIDFKTEADIERHADDAEPLSMLAFKIMNDPFVGSLTFARIYSGKLEKGSSVLNTVKDKRERVGRMLQMHSNSREDIEEAFAGDIVALAGLKETTTGDTLCDPLKPVILERMEFPEPVIQIAIEPKSKGDQEKMGLALNRLAAEDPSFRVKTDQESGQTIIAGMGELHLDIIVDRMRREFKVEANVGAPQVAYRETITRQTEEDYTHKKQTGGTGQFARVKIIFEPNPEGEDFKFESKIVGGSVPKEYIPGVQKGIESVLSSGPLAGFPMLGVKATLIDGAFHDVDSSVLAFEIASRACFREAAKKAGAQLLEPMMKVEVVTPEDYVGDVIGDLNSRRGQIQGQETRGIAVVISANVPLANMFKYVDNLRSMSQGRAQYTMTFDHYAPVPSNVATEIQAKYSGQK</sequence>
<keyword id="KW-0963">Cytoplasm</keyword>
<keyword id="KW-0251">Elongation factor</keyword>
<keyword id="KW-0342">GTP-binding</keyword>
<keyword id="KW-0547">Nucleotide-binding</keyword>
<keyword id="KW-0648">Protein biosynthesis</keyword>